<protein>
    <recommendedName>
        <fullName>Thioredoxin reductase 1, mitochondrial</fullName>
        <ecNumber evidence="8 10">1.8.1.9</ecNumber>
    </recommendedName>
    <alternativeName>
        <fullName>NADPH-dependent thioredoxin reductase 1</fullName>
        <shortName>NTR1</shortName>
    </alternativeName>
    <alternativeName>
        <fullName>NADPH-dependent thioredoxin reductase B</fullName>
        <shortName evidence="6">AtNTRB</shortName>
    </alternativeName>
</protein>
<reference key="1">
    <citation type="journal article" date="1999" name="Nature">
        <title>Sequence and analysis of chromosome 4 of the plant Arabidopsis thaliana.</title>
        <authorList>
            <person name="Mayer K.F.X."/>
            <person name="Schueller C."/>
            <person name="Wambutt R."/>
            <person name="Murphy G."/>
            <person name="Volckaert G."/>
            <person name="Pohl T."/>
            <person name="Duesterhoeft A."/>
            <person name="Stiekema W."/>
            <person name="Entian K.-D."/>
            <person name="Terryn N."/>
            <person name="Harris B."/>
            <person name="Ansorge W."/>
            <person name="Brandt P."/>
            <person name="Grivell L.A."/>
            <person name="Rieger M."/>
            <person name="Weichselgartner M."/>
            <person name="de Simone V."/>
            <person name="Obermaier B."/>
            <person name="Mache R."/>
            <person name="Mueller M."/>
            <person name="Kreis M."/>
            <person name="Delseny M."/>
            <person name="Puigdomenech P."/>
            <person name="Watson M."/>
            <person name="Schmidtheini T."/>
            <person name="Reichert B."/>
            <person name="Portetelle D."/>
            <person name="Perez-Alonso M."/>
            <person name="Boutry M."/>
            <person name="Bancroft I."/>
            <person name="Vos P."/>
            <person name="Hoheisel J."/>
            <person name="Zimmermann W."/>
            <person name="Wedler H."/>
            <person name="Ridley P."/>
            <person name="Langham S.-A."/>
            <person name="McCullagh B."/>
            <person name="Bilham L."/>
            <person name="Robben J."/>
            <person name="van der Schueren J."/>
            <person name="Grymonprez B."/>
            <person name="Chuang Y.-J."/>
            <person name="Vandenbussche F."/>
            <person name="Braeken M."/>
            <person name="Weltjens I."/>
            <person name="Voet M."/>
            <person name="Bastiaens I."/>
            <person name="Aert R."/>
            <person name="Defoor E."/>
            <person name="Weitzenegger T."/>
            <person name="Bothe G."/>
            <person name="Ramsperger U."/>
            <person name="Hilbert H."/>
            <person name="Braun M."/>
            <person name="Holzer E."/>
            <person name="Brandt A."/>
            <person name="Peters S."/>
            <person name="van Staveren M."/>
            <person name="Dirkse W."/>
            <person name="Mooijman P."/>
            <person name="Klein Lankhorst R."/>
            <person name="Rose M."/>
            <person name="Hauf J."/>
            <person name="Koetter P."/>
            <person name="Berneiser S."/>
            <person name="Hempel S."/>
            <person name="Feldpausch M."/>
            <person name="Lamberth S."/>
            <person name="Van den Daele H."/>
            <person name="De Keyser A."/>
            <person name="Buysshaert C."/>
            <person name="Gielen J."/>
            <person name="Villarroel R."/>
            <person name="De Clercq R."/>
            <person name="van Montagu M."/>
            <person name="Rogers J."/>
            <person name="Cronin A."/>
            <person name="Quail M.A."/>
            <person name="Bray-Allen S."/>
            <person name="Clark L."/>
            <person name="Doggett J."/>
            <person name="Hall S."/>
            <person name="Kay M."/>
            <person name="Lennard N."/>
            <person name="McLay K."/>
            <person name="Mayes R."/>
            <person name="Pettett A."/>
            <person name="Rajandream M.A."/>
            <person name="Lyne M."/>
            <person name="Benes V."/>
            <person name="Rechmann S."/>
            <person name="Borkova D."/>
            <person name="Bloecker H."/>
            <person name="Scharfe M."/>
            <person name="Grimm M."/>
            <person name="Loehnert T.-H."/>
            <person name="Dose S."/>
            <person name="de Haan M."/>
            <person name="Maarse A.C."/>
            <person name="Schaefer M."/>
            <person name="Mueller-Auer S."/>
            <person name="Gabel C."/>
            <person name="Fuchs M."/>
            <person name="Fartmann B."/>
            <person name="Granderath K."/>
            <person name="Dauner D."/>
            <person name="Herzl A."/>
            <person name="Neumann S."/>
            <person name="Argiriou A."/>
            <person name="Vitale D."/>
            <person name="Liguori R."/>
            <person name="Piravandi E."/>
            <person name="Massenet O."/>
            <person name="Quigley F."/>
            <person name="Clabauld G."/>
            <person name="Muendlein A."/>
            <person name="Felber R."/>
            <person name="Schnabl S."/>
            <person name="Hiller R."/>
            <person name="Schmidt W."/>
            <person name="Lecharny A."/>
            <person name="Aubourg S."/>
            <person name="Chefdor F."/>
            <person name="Cooke R."/>
            <person name="Berger C."/>
            <person name="Monfort A."/>
            <person name="Casacuberta E."/>
            <person name="Gibbons T."/>
            <person name="Weber N."/>
            <person name="Vandenbol M."/>
            <person name="Bargues M."/>
            <person name="Terol J."/>
            <person name="Torres A."/>
            <person name="Perez-Perez A."/>
            <person name="Purnelle B."/>
            <person name="Bent E."/>
            <person name="Johnson S."/>
            <person name="Tacon D."/>
            <person name="Jesse T."/>
            <person name="Heijnen L."/>
            <person name="Schwarz S."/>
            <person name="Scholler P."/>
            <person name="Heber S."/>
            <person name="Francs P."/>
            <person name="Bielke C."/>
            <person name="Frishman D."/>
            <person name="Haase D."/>
            <person name="Lemcke K."/>
            <person name="Mewes H.-W."/>
            <person name="Stocker S."/>
            <person name="Zaccaria P."/>
            <person name="Bevan M."/>
            <person name="Wilson R.K."/>
            <person name="de la Bastide M."/>
            <person name="Habermann K."/>
            <person name="Parnell L."/>
            <person name="Dedhia N."/>
            <person name="Gnoj L."/>
            <person name="Schutz K."/>
            <person name="Huang E."/>
            <person name="Spiegel L."/>
            <person name="Sekhon M."/>
            <person name="Murray J."/>
            <person name="Sheet P."/>
            <person name="Cordes M."/>
            <person name="Abu-Threideh J."/>
            <person name="Stoneking T."/>
            <person name="Kalicki J."/>
            <person name="Graves T."/>
            <person name="Harmon G."/>
            <person name="Edwards J."/>
            <person name="Latreille P."/>
            <person name="Courtney L."/>
            <person name="Cloud J."/>
            <person name="Abbott A."/>
            <person name="Scott K."/>
            <person name="Johnson D."/>
            <person name="Minx P."/>
            <person name="Bentley D."/>
            <person name="Fulton B."/>
            <person name="Miller N."/>
            <person name="Greco T."/>
            <person name="Kemp K."/>
            <person name="Kramer J."/>
            <person name="Fulton L."/>
            <person name="Mardis E."/>
            <person name="Dante M."/>
            <person name="Pepin K."/>
            <person name="Hillier L.W."/>
            <person name="Nelson J."/>
            <person name="Spieth J."/>
            <person name="Ryan E."/>
            <person name="Andrews S."/>
            <person name="Geisel C."/>
            <person name="Layman D."/>
            <person name="Du H."/>
            <person name="Ali J."/>
            <person name="Berghoff A."/>
            <person name="Jones K."/>
            <person name="Drone K."/>
            <person name="Cotton M."/>
            <person name="Joshu C."/>
            <person name="Antonoiu B."/>
            <person name="Zidanic M."/>
            <person name="Strong C."/>
            <person name="Sun H."/>
            <person name="Lamar B."/>
            <person name="Yordan C."/>
            <person name="Ma P."/>
            <person name="Zhong J."/>
            <person name="Preston R."/>
            <person name="Vil D."/>
            <person name="Shekher M."/>
            <person name="Matero A."/>
            <person name="Shah R."/>
            <person name="Swaby I.K."/>
            <person name="O'Shaughnessy A."/>
            <person name="Rodriguez M."/>
            <person name="Hoffman J."/>
            <person name="Till S."/>
            <person name="Granat S."/>
            <person name="Shohdy N."/>
            <person name="Hasegawa A."/>
            <person name="Hameed A."/>
            <person name="Lodhi M."/>
            <person name="Johnson A."/>
            <person name="Chen E."/>
            <person name="Marra M.A."/>
            <person name="Martienssen R."/>
            <person name="McCombie W.R."/>
        </authorList>
    </citation>
    <scope>NUCLEOTIDE SEQUENCE [LARGE SCALE GENOMIC DNA]</scope>
    <source>
        <strain>cv. Columbia</strain>
    </source>
</reference>
<reference key="2">
    <citation type="journal article" date="2017" name="Plant J.">
        <title>Araport11: a complete reannotation of the Arabidopsis thaliana reference genome.</title>
        <authorList>
            <person name="Cheng C.Y."/>
            <person name="Krishnakumar V."/>
            <person name="Chan A.P."/>
            <person name="Thibaud-Nissen F."/>
            <person name="Schobel S."/>
            <person name="Town C.D."/>
        </authorList>
    </citation>
    <scope>GENOME REANNOTATION</scope>
    <source>
        <strain>cv. Columbia</strain>
    </source>
</reference>
<reference key="3">
    <citation type="journal article" date="1994" name="J. Mol. Biol.">
        <title>Arabidopsis thaliana NAPHP thioredoxin reductase. cDNA characterization and expression of the recombinant protein in Escherichia coli.</title>
        <authorList>
            <person name="Jacquot J.-P."/>
            <person name="Rivera-Madrid R."/>
            <person name="Marinho P."/>
            <person name="Kollarova M."/>
            <person name="le Marechal P."/>
            <person name="Miginiac-Maslow M."/>
            <person name="Meyer Y."/>
        </authorList>
    </citation>
    <scope>NUCLEOTIDE SEQUENCE [MRNA] OF 12-375</scope>
    <scope>FUNCTION</scope>
    <scope>CATALYTIC ACTIVITY</scope>
    <scope>BIOPHYSICOCHEMICAL PROPERTIES</scope>
    <scope>SUBUNIT</scope>
    <source>
        <tissue>Silique</tissue>
    </source>
</reference>
<reference key="4">
    <citation type="journal article" date="2003" name="Science">
        <title>Empirical analysis of transcriptional activity in the Arabidopsis genome.</title>
        <authorList>
            <person name="Yamada K."/>
            <person name="Lim J."/>
            <person name="Dale J.M."/>
            <person name="Chen H."/>
            <person name="Shinn P."/>
            <person name="Palm C.J."/>
            <person name="Southwick A.M."/>
            <person name="Wu H.C."/>
            <person name="Kim C.J."/>
            <person name="Nguyen M."/>
            <person name="Pham P.K."/>
            <person name="Cheuk R.F."/>
            <person name="Karlin-Newmann G."/>
            <person name="Liu S.X."/>
            <person name="Lam B."/>
            <person name="Sakano H."/>
            <person name="Wu T."/>
            <person name="Yu G."/>
            <person name="Miranda M."/>
            <person name="Quach H.L."/>
            <person name="Tripp M."/>
            <person name="Chang C.H."/>
            <person name="Lee J.M."/>
            <person name="Toriumi M.J."/>
            <person name="Chan M.M."/>
            <person name="Tang C.C."/>
            <person name="Onodera C.S."/>
            <person name="Deng J.M."/>
            <person name="Akiyama K."/>
            <person name="Ansari Y."/>
            <person name="Arakawa T."/>
            <person name="Banh J."/>
            <person name="Banno F."/>
            <person name="Bowser L."/>
            <person name="Brooks S.Y."/>
            <person name="Carninci P."/>
            <person name="Chao Q."/>
            <person name="Choy N."/>
            <person name="Enju A."/>
            <person name="Goldsmith A.D."/>
            <person name="Gurjal M."/>
            <person name="Hansen N.F."/>
            <person name="Hayashizaki Y."/>
            <person name="Johnson-Hopson C."/>
            <person name="Hsuan V.W."/>
            <person name="Iida K."/>
            <person name="Karnes M."/>
            <person name="Khan S."/>
            <person name="Koesema E."/>
            <person name="Ishida J."/>
            <person name="Jiang P.X."/>
            <person name="Jones T."/>
            <person name="Kawai J."/>
            <person name="Kamiya A."/>
            <person name="Meyers C."/>
            <person name="Nakajima M."/>
            <person name="Narusaka M."/>
            <person name="Seki M."/>
            <person name="Sakurai T."/>
            <person name="Satou M."/>
            <person name="Tamse R."/>
            <person name="Vaysberg M."/>
            <person name="Wallender E.K."/>
            <person name="Wong C."/>
            <person name="Yamamura Y."/>
            <person name="Yuan S."/>
            <person name="Shinozaki K."/>
            <person name="Davis R.W."/>
            <person name="Theologis A."/>
            <person name="Ecker J.R."/>
        </authorList>
    </citation>
    <scope>NUCLEOTIDE SEQUENCE [LARGE SCALE MRNA] OF 19-375</scope>
    <source>
        <strain>cv. Columbia</strain>
    </source>
</reference>
<reference key="5">
    <citation type="journal article" date="2001" name="Proc. Natl. Acad. Sci. U.S.A.">
        <title>Identification and characterization of a mitochondrial thioredoxin system in plants.</title>
        <authorList>
            <person name="Laloi C."/>
            <person name="Rayapuram N."/>
            <person name="Chartier Y."/>
            <person name="Grienenberger J.M."/>
            <person name="Bonnard G."/>
            <person name="Meyer Y."/>
        </authorList>
    </citation>
    <scope>FUNCTION</scope>
    <scope>CATALYTIC ACTIVITY</scope>
    <scope>BIOPHYSICOCHEMICAL PROPERTIES</scope>
    <scope>SUBCELLULAR LOCATION</scope>
</reference>
<reference key="6">
    <citation type="journal article" date="2005" name="FEBS Lett.">
        <title>AtNTRB is the major mitochondrial thioredoxin reductase in Arabidopsis thaliana.</title>
        <authorList>
            <person name="Reichheld J.P."/>
            <person name="Meyer E."/>
            <person name="Khafif M."/>
            <person name="Bonnard G."/>
            <person name="Meyer Y."/>
        </authorList>
    </citation>
    <scope>SUBCELLULAR LOCATION</scope>
</reference>
<reference key="7">
    <citation type="journal article" date="2015" name="J. Exp. Bot.">
        <title>Identification of cleavage sites and substrate proteins for two mitochondrial intermediate peptidases in Arabidopsis thaliana.</title>
        <authorList>
            <person name="Carrie C."/>
            <person name="Venne A.S."/>
            <person name="Zahedi R.P."/>
            <person name="Soll J."/>
        </authorList>
    </citation>
    <scope>IDENTIFICATION BY MASS SPECTROMETRY</scope>
    <scope>CLEAVAGE OF TRANSIT PEPTIDE AFTER PHE-37</scope>
</reference>
<reference key="8">
    <citation type="journal article" date="1996" name="J. Mol. Biol.">
        <title>Crystal structure of Arabidopsis thaliana NADPH dependent thioredoxin reductase at 2.5-A resolution.</title>
        <authorList>
            <person name="Dai S."/>
            <person name="Saarinrn M."/>
            <person name="Ramaswamy S."/>
            <person name="Meyer Y."/>
            <person name="Jacquot J.-P."/>
            <person name="Eklund H."/>
        </authorList>
    </citation>
    <scope>X-RAY CRYSTALLOGRAPHY (2.5 ANGSTROMS) OF 43-375 IN COMPLEX WITH FAD</scope>
    <scope>COFACTOR</scope>
    <scope>DISULFIDE BOND</scope>
</reference>
<evidence type="ECO:0000269" key="1">
    <source>
    </source>
</evidence>
<evidence type="ECO:0000269" key="2">
    <source>
    </source>
</evidence>
<evidence type="ECO:0000269" key="3">
    <source>
    </source>
</evidence>
<evidence type="ECO:0000269" key="4">
    <source>
    </source>
</evidence>
<evidence type="ECO:0000269" key="5">
    <source>
    </source>
</evidence>
<evidence type="ECO:0000303" key="6">
    <source>
    </source>
</evidence>
<evidence type="ECO:0000305" key="7"/>
<evidence type="ECO:0000305" key="8">
    <source>
    </source>
</evidence>
<evidence type="ECO:0000305" key="9">
    <source>
    </source>
</evidence>
<evidence type="ECO:0000305" key="10">
    <source>
    </source>
</evidence>
<evidence type="ECO:0007829" key="11">
    <source>
        <dbReference type="PDB" id="1VDC"/>
    </source>
</evidence>
<feature type="transit peptide" description="Mitochondrion" evidence="3">
    <location>
        <begin position="1"/>
        <end position="37"/>
    </location>
</feature>
<feature type="chain" id="PRO_0000166771" description="Thioredoxin reductase 1, mitochondrial">
    <location>
        <begin position="38"/>
        <end position="375"/>
    </location>
</feature>
<feature type="binding site" evidence="5">
    <location>
        <begin position="58"/>
        <end position="61"/>
    </location>
    <ligand>
        <name>FAD</name>
        <dbReference type="ChEBI" id="CHEBI:57692"/>
    </ligand>
</feature>
<feature type="binding site" evidence="5">
    <location>
        <begin position="79"/>
        <end position="80"/>
    </location>
    <ligand>
        <name>FAD</name>
        <dbReference type="ChEBI" id="CHEBI:57692"/>
    </ligand>
</feature>
<feature type="binding site" evidence="5">
    <location>
        <begin position="87"/>
        <end position="92"/>
    </location>
    <ligand>
        <name>FAD</name>
        <dbReference type="ChEBI" id="CHEBI:57692"/>
    </ligand>
</feature>
<feature type="binding site" evidence="5">
    <location>
        <position position="101"/>
    </location>
    <ligand>
        <name>FAD</name>
        <dbReference type="ChEBI" id="CHEBI:57692"/>
    </ligand>
</feature>
<feature type="binding site" evidence="5">
    <location>
        <position position="134"/>
    </location>
    <ligand>
        <name>FAD</name>
        <dbReference type="ChEBI" id="CHEBI:57692"/>
    </ligand>
</feature>
<feature type="binding site" evidence="5">
    <location>
        <position position="192"/>
    </location>
    <ligand>
        <name>FAD</name>
        <dbReference type="ChEBI" id="CHEBI:57692"/>
    </ligand>
</feature>
<feature type="binding site" evidence="5">
    <location>
        <position position="337"/>
    </location>
    <ligand>
        <name>FAD</name>
        <dbReference type="ChEBI" id="CHEBI:57692"/>
    </ligand>
</feature>
<feature type="binding site" evidence="5">
    <location>
        <begin position="344"/>
        <end position="346"/>
    </location>
    <ligand>
        <name>FAD</name>
        <dbReference type="ChEBI" id="CHEBI:57692"/>
    </ligand>
</feature>
<feature type="disulfide bond" description="Redox-active" evidence="5">
    <location>
        <begin position="189"/>
        <end position="192"/>
    </location>
</feature>
<feature type="sequence conflict" description="In Ref. 4; AAO42318." evidence="7" ref="4">
    <original>I</original>
    <variation>F</variation>
    <location>
        <position position="255"/>
    </location>
</feature>
<feature type="strand" evidence="11">
    <location>
        <begin position="47"/>
        <end position="56"/>
    </location>
</feature>
<feature type="helix" evidence="11">
    <location>
        <begin position="60"/>
        <end position="71"/>
    </location>
</feature>
<feature type="strand" evidence="11">
    <location>
        <begin position="77"/>
        <end position="79"/>
    </location>
</feature>
<feature type="strand" evidence="11">
    <location>
        <begin position="82"/>
        <end position="84"/>
    </location>
</feature>
<feature type="helix" evidence="11">
    <location>
        <begin position="92"/>
        <end position="95"/>
    </location>
</feature>
<feature type="strand" evidence="11">
    <location>
        <begin position="97"/>
        <end position="99"/>
    </location>
</feature>
<feature type="helix" evidence="11">
    <location>
        <begin position="111"/>
        <end position="124"/>
    </location>
</feature>
<feature type="strand" evidence="11">
    <location>
        <begin position="128"/>
        <end position="130"/>
    </location>
</feature>
<feature type="strand" evidence="11">
    <location>
        <begin position="136"/>
        <end position="138"/>
    </location>
</feature>
<feature type="strand" evidence="11">
    <location>
        <begin position="140"/>
        <end position="147"/>
    </location>
</feature>
<feature type="strand" evidence="11">
    <location>
        <begin position="149"/>
        <end position="160"/>
    </location>
</feature>
<feature type="strand" evidence="11">
    <location>
        <begin position="164"/>
        <end position="166"/>
    </location>
</feature>
<feature type="strand" evidence="11">
    <location>
        <begin position="175"/>
        <end position="179"/>
    </location>
</feature>
<feature type="turn" evidence="11">
    <location>
        <begin position="183"/>
        <end position="185"/>
    </location>
</feature>
<feature type="strand" evidence="11">
    <location>
        <begin position="186"/>
        <end position="188"/>
    </location>
</feature>
<feature type="helix" evidence="11">
    <location>
        <begin position="190"/>
        <end position="193"/>
    </location>
</feature>
<feature type="helix" evidence="11">
    <location>
        <begin position="197"/>
        <end position="199"/>
    </location>
</feature>
<feature type="strand" evidence="11">
    <location>
        <begin position="202"/>
        <end position="207"/>
    </location>
</feature>
<feature type="helix" evidence="11">
    <location>
        <begin position="211"/>
        <end position="220"/>
    </location>
</feature>
<feature type="turn" evidence="11">
    <location>
        <begin position="221"/>
        <end position="223"/>
    </location>
</feature>
<feature type="strand" evidence="11">
    <location>
        <begin position="224"/>
        <end position="230"/>
    </location>
</feature>
<feature type="strand" evidence="11">
    <location>
        <begin position="232"/>
        <end position="235"/>
    </location>
</feature>
<feature type="helix" evidence="11">
    <location>
        <begin position="240"/>
        <end position="247"/>
    </location>
</feature>
<feature type="strand" evidence="11">
    <location>
        <begin position="252"/>
        <end position="255"/>
    </location>
</feature>
<feature type="strand" evidence="11">
    <location>
        <begin position="257"/>
        <end position="279"/>
    </location>
</feature>
<feature type="turn" evidence="11">
    <location>
        <begin position="280"/>
        <end position="282"/>
    </location>
</feature>
<feature type="strand" evidence="11">
    <location>
        <begin position="285"/>
        <end position="289"/>
    </location>
</feature>
<feature type="strand" evidence="11">
    <location>
        <begin position="291"/>
        <end position="295"/>
    </location>
</feature>
<feature type="strand" evidence="11">
    <location>
        <begin position="299"/>
        <end position="302"/>
    </location>
</feature>
<feature type="helix" evidence="11">
    <location>
        <begin position="304"/>
        <end position="306"/>
    </location>
</feature>
<feature type="strand" evidence="11">
    <location>
        <begin position="332"/>
        <end position="334"/>
    </location>
</feature>
<feature type="helix" evidence="11">
    <location>
        <begin position="336"/>
        <end position="339"/>
    </location>
</feature>
<feature type="helix" evidence="11">
    <location>
        <begin position="346"/>
        <end position="366"/>
    </location>
</feature>
<comment type="function">
    <text evidence="1 4">NADPH-dependent thioredoxin-disulfide reductase that reduces thioredoxins O1, O2 and F3.</text>
</comment>
<comment type="catalytic activity">
    <reaction evidence="8 10">
        <text>[thioredoxin]-dithiol + NADP(+) = [thioredoxin]-disulfide + NADPH + H(+)</text>
        <dbReference type="Rhea" id="RHEA:20345"/>
        <dbReference type="Rhea" id="RHEA-COMP:10698"/>
        <dbReference type="Rhea" id="RHEA-COMP:10700"/>
        <dbReference type="ChEBI" id="CHEBI:15378"/>
        <dbReference type="ChEBI" id="CHEBI:29950"/>
        <dbReference type="ChEBI" id="CHEBI:50058"/>
        <dbReference type="ChEBI" id="CHEBI:57783"/>
        <dbReference type="ChEBI" id="CHEBI:58349"/>
        <dbReference type="EC" id="1.8.1.9"/>
    </reaction>
    <physiologicalReaction direction="right-to-left" evidence="8 10">
        <dbReference type="Rhea" id="RHEA:20347"/>
    </physiologicalReaction>
</comment>
<comment type="cofactor">
    <cofactor evidence="5">
        <name>FAD</name>
        <dbReference type="ChEBI" id="CHEBI:57692"/>
    </cofactor>
    <text evidence="5">Binds 1 FAD per subunit.</text>
</comment>
<comment type="biophysicochemical properties">
    <kinetics>
        <KM evidence="4">1.1 uM for thioredoxin</KM>
        <KM evidence="1">2.2 uM for thioredoxin O1</KM>
        <KM evidence="1">2.1 uM for thioredoxin O2</KM>
        <KM evidence="1">3 uM for thioredoxin F3</KM>
    </kinetics>
</comment>
<comment type="subunit">
    <text evidence="4 5">Homodimer.</text>
</comment>
<comment type="subcellular location">
    <subcellularLocation>
        <location evidence="1 2">Cytoplasm</location>
    </subcellularLocation>
    <subcellularLocation>
        <location evidence="2 9">Mitochondrion</location>
    </subcellularLocation>
</comment>
<comment type="tissue specificity">
    <text>Ubiquitous.</text>
</comment>
<comment type="miscellaneous">
    <text>The active site is a redox-active disulfide bond.</text>
</comment>
<comment type="similarity">
    <text evidence="7">Belongs to the class-II pyridine nucleotide-disulfide oxidoreductase family.</text>
</comment>
<comment type="sequence caution" evidence="7">
    <conflict type="erroneous initiation">
        <sequence resource="EMBL-CDS" id="AAO42318"/>
    </conflict>
    <text>Truncated N-terminus.</text>
</comment>
<comment type="sequence caution" evidence="7">
    <conflict type="miscellaneous discrepancy">
        <sequence resource="EMBL-CDS" id="CAA80656"/>
    </conflict>
    <text>Sequencing errors.</text>
</comment>
<comment type="sequence caution" evidence="7">
    <conflict type="erroneous initiation">
        <sequence resource="EMBL-CDS" id="CAB54874"/>
    </conflict>
    <text>Truncated N-terminus.</text>
</comment>
<comment type="sequence caution" evidence="7">
    <conflict type="erroneous initiation">
        <sequence resource="EMBL-CDS" id="CAB80262"/>
    </conflict>
    <text>Truncated N-terminus.</text>
</comment>
<keyword id="KW-0002">3D-structure</keyword>
<keyword id="KW-0963">Cytoplasm</keyword>
<keyword id="KW-1015">Disulfide bond</keyword>
<keyword id="KW-0249">Electron transport</keyword>
<keyword id="KW-0274">FAD</keyword>
<keyword id="KW-0285">Flavoprotein</keyword>
<keyword id="KW-0496">Mitochondrion</keyword>
<keyword id="KW-0521">NADP</keyword>
<keyword id="KW-0560">Oxidoreductase</keyword>
<keyword id="KW-0676">Redox-active center</keyword>
<keyword id="KW-1185">Reference proteome</keyword>
<keyword id="KW-0809">Transit peptide</keyword>
<keyword id="KW-0813">Transport</keyword>
<sequence length="375" mass="39626">MNCVSRLKCLISKARSFARLGGESTLSQPPSLASAAFSSSAVMNGLETHNTRLCIVGSGPAAHTAAIYAARAELKPLLFEGWMANDIAPGGQLTTTTDVENFPGFPEGILGVELTDKFRKQSERFGTTIFTETVTKVDFSSKPFKLFTDSKAILADAVILATGAVAKRLSFVGSGEASGGFWNRGISACAVCDGAAPIFRNKPLAVIGGGDSAMEEANFLTKYGSKVYIIHRRDAFRASKIMQQRALSNPKIDVIWNSSVVEAYGDGERDVLGGLKVKNVVTGDVSDLKVSGLFFAIGHEPATKFLDGGVELDSDGYVVTKPGTTQTSVPGVFAAGDVQDKKYRQAITAAGTGCMAALDAEHYLQEIGSQQGKSD</sequence>
<dbReference type="EC" id="1.8.1.9" evidence="8 10"/>
<dbReference type="EMBL" id="Z23109">
    <property type="protein sequence ID" value="CAA80656.1"/>
    <property type="status" value="ALT_SEQ"/>
    <property type="molecule type" value="mRNA"/>
</dbReference>
<dbReference type="EMBL" id="AL117188">
    <property type="protein sequence ID" value="CAB54874.1"/>
    <property type="status" value="ALT_INIT"/>
    <property type="molecule type" value="Genomic_DNA"/>
</dbReference>
<dbReference type="EMBL" id="AL161587">
    <property type="protein sequence ID" value="CAB80262.1"/>
    <property type="status" value="ALT_INIT"/>
    <property type="molecule type" value="Genomic_DNA"/>
</dbReference>
<dbReference type="EMBL" id="CP002687">
    <property type="protein sequence ID" value="AEE86518.1"/>
    <property type="molecule type" value="Genomic_DNA"/>
</dbReference>
<dbReference type="EMBL" id="BT004322">
    <property type="protein sequence ID" value="AAO42318.1"/>
    <property type="status" value="ALT_INIT"/>
    <property type="molecule type" value="mRNA"/>
</dbReference>
<dbReference type="PIR" id="S44027">
    <property type="entry name" value="S44027"/>
</dbReference>
<dbReference type="PIR" id="T41743">
    <property type="entry name" value="T41743"/>
</dbReference>
<dbReference type="RefSeq" id="NP_195271.2">
    <property type="nucleotide sequence ID" value="NM_119711.4"/>
</dbReference>
<dbReference type="PDB" id="1VDC">
    <property type="method" value="X-ray"/>
    <property type="resolution" value="2.50 A"/>
    <property type="chains" value="A=43-375"/>
</dbReference>
<dbReference type="PDBsum" id="1VDC"/>
<dbReference type="SMR" id="Q39243"/>
<dbReference type="FunCoup" id="Q39243">
    <property type="interactions" value="724"/>
</dbReference>
<dbReference type="STRING" id="3702.Q39243"/>
<dbReference type="iPTMnet" id="Q39243"/>
<dbReference type="PaxDb" id="3702-AT4G35460.1"/>
<dbReference type="ProteomicsDB" id="232449"/>
<dbReference type="EnsemblPlants" id="AT4G35460.1">
    <property type="protein sequence ID" value="AT4G35460.1"/>
    <property type="gene ID" value="AT4G35460"/>
</dbReference>
<dbReference type="GeneID" id="829698"/>
<dbReference type="Gramene" id="AT4G35460.1">
    <property type="protein sequence ID" value="AT4G35460.1"/>
    <property type="gene ID" value="AT4G35460"/>
</dbReference>
<dbReference type="KEGG" id="ath:AT4G35460"/>
<dbReference type="Araport" id="AT4G35460"/>
<dbReference type="TAIR" id="AT4G35460">
    <property type="gene designation" value="NTRB"/>
</dbReference>
<dbReference type="eggNOG" id="KOG0404">
    <property type="taxonomic scope" value="Eukaryota"/>
</dbReference>
<dbReference type="HOGENOM" id="CLU_031864_5_1_1"/>
<dbReference type="InParanoid" id="Q39243"/>
<dbReference type="OMA" id="ANKFYWI"/>
<dbReference type="PhylomeDB" id="Q39243"/>
<dbReference type="BioCyc" id="ARA:AT4G35460-MONOMER"/>
<dbReference type="BRENDA" id="1.8.1.9">
    <property type="organism ID" value="399"/>
</dbReference>
<dbReference type="CD-CODE" id="4299E36E">
    <property type="entry name" value="Nucleolus"/>
</dbReference>
<dbReference type="EvolutionaryTrace" id="Q39243"/>
<dbReference type="PRO" id="PR:Q39243"/>
<dbReference type="Proteomes" id="UP000006548">
    <property type="component" value="Chromosome 4"/>
</dbReference>
<dbReference type="ExpressionAtlas" id="Q39243">
    <property type="expression patterns" value="baseline and differential"/>
</dbReference>
<dbReference type="GO" id="GO:0009941">
    <property type="term" value="C:chloroplast envelope"/>
    <property type="evidence" value="ECO:0007005"/>
    <property type="project" value="TAIR"/>
</dbReference>
<dbReference type="GO" id="GO:0005829">
    <property type="term" value="C:cytosol"/>
    <property type="evidence" value="ECO:0000314"/>
    <property type="project" value="TAIR"/>
</dbReference>
<dbReference type="GO" id="GO:0005739">
    <property type="term" value="C:mitochondrion"/>
    <property type="evidence" value="ECO:0000314"/>
    <property type="project" value="TAIR"/>
</dbReference>
<dbReference type="GO" id="GO:0005886">
    <property type="term" value="C:plasma membrane"/>
    <property type="evidence" value="ECO:0007005"/>
    <property type="project" value="TAIR"/>
</dbReference>
<dbReference type="GO" id="GO:0004791">
    <property type="term" value="F:thioredoxin-disulfide reductase (NADPH) activity"/>
    <property type="evidence" value="ECO:0000314"/>
    <property type="project" value="TAIR"/>
</dbReference>
<dbReference type="GO" id="GO:0051781">
    <property type="term" value="P:positive regulation of cell division"/>
    <property type="evidence" value="ECO:0000316"/>
    <property type="project" value="TAIR"/>
</dbReference>
<dbReference type="GO" id="GO:0019430">
    <property type="term" value="P:removal of superoxide radicals"/>
    <property type="evidence" value="ECO:0007669"/>
    <property type="project" value="InterPro"/>
</dbReference>
<dbReference type="FunFam" id="3.50.50.60:FF:000064">
    <property type="entry name" value="Thioredoxin reductase"/>
    <property type="match status" value="1"/>
</dbReference>
<dbReference type="Gene3D" id="3.50.50.60">
    <property type="entry name" value="FAD/NAD(P)-binding domain"/>
    <property type="match status" value="2"/>
</dbReference>
<dbReference type="InterPro" id="IPR036188">
    <property type="entry name" value="FAD/NAD-bd_sf"/>
</dbReference>
<dbReference type="InterPro" id="IPR023753">
    <property type="entry name" value="FAD/NAD-binding_dom"/>
</dbReference>
<dbReference type="InterPro" id="IPR050097">
    <property type="entry name" value="Ferredoxin-NADP_redctase_2"/>
</dbReference>
<dbReference type="InterPro" id="IPR008255">
    <property type="entry name" value="Pyr_nucl-diS_OxRdtase_2_AS"/>
</dbReference>
<dbReference type="InterPro" id="IPR005982">
    <property type="entry name" value="Thioredox_Rdtase"/>
</dbReference>
<dbReference type="NCBIfam" id="TIGR01292">
    <property type="entry name" value="TRX_reduct"/>
    <property type="match status" value="1"/>
</dbReference>
<dbReference type="PANTHER" id="PTHR48105">
    <property type="entry name" value="THIOREDOXIN REDUCTASE 1-RELATED-RELATED"/>
    <property type="match status" value="1"/>
</dbReference>
<dbReference type="Pfam" id="PF07992">
    <property type="entry name" value="Pyr_redox_2"/>
    <property type="match status" value="1"/>
</dbReference>
<dbReference type="PRINTS" id="PR00368">
    <property type="entry name" value="FADPNR"/>
</dbReference>
<dbReference type="PRINTS" id="PR00469">
    <property type="entry name" value="PNDRDTASEII"/>
</dbReference>
<dbReference type="SUPFAM" id="SSF51905">
    <property type="entry name" value="FAD/NAD(P)-binding domain"/>
    <property type="match status" value="1"/>
</dbReference>
<dbReference type="PROSITE" id="PS00573">
    <property type="entry name" value="PYRIDINE_REDOX_2"/>
    <property type="match status" value="1"/>
</dbReference>
<accession>Q39243</accession>
<accession>Q84W20</accession>
<accession>Q9SVW9</accession>
<organism>
    <name type="scientific">Arabidopsis thaliana</name>
    <name type="common">Mouse-ear cress</name>
    <dbReference type="NCBI Taxonomy" id="3702"/>
    <lineage>
        <taxon>Eukaryota</taxon>
        <taxon>Viridiplantae</taxon>
        <taxon>Streptophyta</taxon>
        <taxon>Embryophyta</taxon>
        <taxon>Tracheophyta</taxon>
        <taxon>Spermatophyta</taxon>
        <taxon>Magnoliopsida</taxon>
        <taxon>eudicotyledons</taxon>
        <taxon>Gunneridae</taxon>
        <taxon>Pentapetalae</taxon>
        <taxon>rosids</taxon>
        <taxon>malvids</taxon>
        <taxon>Brassicales</taxon>
        <taxon>Brassicaceae</taxon>
        <taxon>Camelineae</taxon>
        <taxon>Arabidopsis</taxon>
    </lineage>
</organism>
<name>TRXB1_ARATH</name>
<proteinExistence type="evidence at protein level"/>
<gene>
    <name type="primary">NTR1</name>
    <name type="synonym">NTRB</name>
    <name type="ordered locus">At4g35460</name>
    <name type="ORF">F15J1.30</name>
</gene>